<protein>
    <recommendedName>
        <fullName evidence="1">ATP-dependent Clp protease ATP-binding subunit ClpX</fullName>
    </recommendedName>
</protein>
<gene>
    <name evidence="1" type="primary">clpX</name>
    <name type="ordered locus">HD_0218</name>
</gene>
<feature type="chain" id="PRO_0000160362" description="ATP-dependent Clp protease ATP-binding subunit ClpX">
    <location>
        <begin position="1"/>
        <end position="418"/>
    </location>
</feature>
<feature type="domain" description="ClpX-type ZB" evidence="2">
    <location>
        <begin position="1"/>
        <end position="50"/>
    </location>
</feature>
<feature type="binding site" evidence="2">
    <location>
        <position position="9"/>
    </location>
    <ligand>
        <name>Zn(2+)</name>
        <dbReference type="ChEBI" id="CHEBI:29105"/>
    </ligand>
</feature>
<feature type="binding site" evidence="2">
    <location>
        <position position="12"/>
    </location>
    <ligand>
        <name>Zn(2+)</name>
        <dbReference type="ChEBI" id="CHEBI:29105"/>
    </ligand>
</feature>
<feature type="binding site" evidence="2">
    <location>
        <position position="31"/>
    </location>
    <ligand>
        <name>Zn(2+)</name>
        <dbReference type="ChEBI" id="CHEBI:29105"/>
    </ligand>
</feature>
<feature type="binding site" evidence="2">
    <location>
        <position position="34"/>
    </location>
    <ligand>
        <name>Zn(2+)</name>
        <dbReference type="ChEBI" id="CHEBI:29105"/>
    </ligand>
</feature>
<feature type="binding site" evidence="1">
    <location>
        <begin position="123"/>
        <end position="130"/>
    </location>
    <ligand>
        <name>ATP</name>
        <dbReference type="ChEBI" id="CHEBI:30616"/>
    </ligand>
</feature>
<comment type="function">
    <text evidence="1">ATP-dependent specificity component of the Clp protease. It directs the protease to specific substrates. Can perform chaperone functions in the absence of ClpP.</text>
</comment>
<comment type="subunit">
    <text evidence="1">Component of the ClpX-ClpP complex. Forms a hexameric ring that, in the presence of ATP, binds to fourteen ClpP subunits assembled into a disk-like structure with a central cavity, resembling the structure of eukaryotic proteasomes.</text>
</comment>
<comment type="similarity">
    <text evidence="1">Belongs to the ClpX chaperone family.</text>
</comment>
<proteinExistence type="inferred from homology"/>
<name>CLPX_HAEDU</name>
<dbReference type="EMBL" id="AE017143">
    <property type="protein sequence ID" value="AAP95208.1"/>
    <property type="molecule type" value="Genomic_DNA"/>
</dbReference>
<dbReference type="RefSeq" id="WP_010944261.1">
    <property type="nucleotide sequence ID" value="NC_002940.2"/>
</dbReference>
<dbReference type="SMR" id="Q7VP79"/>
<dbReference type="STRING" id="233412.HD_0218"/>
<dbReference type="KEGG" id="hdu:HD_0218"/>
<dbReference type="eggNOG" id="COG1219">
    <property type="taxonomic scope" value="Bacteria"/>
</dbReference>
<dbReference type="HOGENOM" id="CLU_014218_8_2_6"/>
<dbReference type="OrthoDB" id="9804062at2"/>
<dbReference type="Proteomes" id="UP000001022">
    <property type="component" value="Chromosome"/>
</dbReference>
<dbReference type="GO" id="GO:0009376">
    <property type="term" value="C:HslUV protease complex"/>
    <property type="evidence" value="ECO:0007669"/>
    <property type="project" value="TreeGrafter"/>
</dbReference>
<dbReference type="GO" id="GO:0005524">
    <property type="term" value="F:ATP binding"/>
    <property type="evidence" value="ECO:0007669"/>
    <property type="project" value="UniProtKB-UniRule"/>
</dbReference>
<dbReference type="GO" id="GO:0016887">
    <property type="term" value="F:ATP hydrolysis activity"/>
    <property type="evidence" value="ECO:0007669"/>
    <property type="project" value="InterPro"/>
</dbReference>
<dbReference type="GO" id="GO:0140662">
    <property type="term" value="F:ATP-dependent protein folding chaperone"/>
    <property type="evidence" value="ECO:0007669"/>
    <property type="project" value="InterPro"/>
</dbReference>
<dbReference type="GO" id="GO:0046983">
    <property type="term" value="F:protein dimerization activity"/>
    <property type="evidence" value="ECO:0007669"/>
    <property type="project" value="InterPro"/>
</dbReference>
<dbReference type="GO" id="GO:0051082">
    <property type="term" value="F:unfolded protein binding"/>
    <property type="evidence" value="ECO:0007669"/>
    <property type="project" value="UniProtKB-UniRule"/>
</dbReference>
<dbReference type="GO" id="GO:0008270">
    <property type="term" value="F:zinc ion binding"/>
    <property type="evidence" value="ECO:0007669"/>
    <property type="project" value="InterPro"/>
</dbReference>
<dbReference type="GO" id="GO:0051301">
    <property type="term" value="P:cell division"/>
    <property type="evidence" value="ECO:0007669"/>
    <property type="project" value="TreeGrafter"/>
</dbReference>
<dbReference type="GO" id="GO:0051603">
    <property type="term" value="P:proteolysis involved in protein catabolic process"/>
    <property type="evidence" value="ECO:0007669"/>
    <property type="project" value="TreeGrafter"/>
</dbReference>
<dbReference type="CDD" id="cd19497">
    <property type="entry name" value="RecA-like_ClpX"/>
    <property type="match status" value="1"/>
</dbReference>
<dbReference type="FunFam" id="1.10.8.60:FF:000002">
    <property type="entry name" value="ATP-dependent Clp protease ATP-binding subunit ClpX"/>
    <property type="match status" value="1"/>
</dbReference>
<dbReference type="FunFam" id="3.40.50.300:FF:000005">
    <property type="entry name" value="ATP-dependent Clp protease ATP-binding subunit ClpX"/>
    <property type="match status" value="1"/>
</dbReference>
<dbReference type="Gene3D" id="1.10.8.60">
    <property type="match status" value="1"/>
</dbReference>
<dbReference type="Gene3D" id="6.20.220.10">
    <property type="entry name" value="ClpX chaperone, C4-type zinc finger domain"/>
    <property type="match status" value="1"/>
</dbReference>
<dbReference type="Gene3D" id="3.40.50.300">
    <property type="entry name" value="P-loop containing nucleotide triphosphate hydrolases"/>
    <property type="match status" value="1"/>
</dbReference>
<dbReference type="HAMAP" id="MF_00175">
    <property type="entry name" value="ClpX"/>
    <property type="match status" value="1"/>
</dbReference>
<dbReference type="InterPro" id="IPR003593">
    <property type="entry name" value="AAA+_ATPase"/>
</dbReference>
<dbReference type="InterPro" id="IPR050052">
    <property type="entry name" value="ATP-dep_Clp_protease_ClpX"/>
</dbReference>
<dbReference type="InterPro" id="IPR003959">
    <property type="entry name" value="ATPase_AAA_core"/>
</dbReference>
<dbReference type="InterPro" id="IPR019489">
    <property type="entry name" value="Clp_ATPase_C"/>
</dbReference>
<dbReference type="InterPro" id="IPR004487">
    <property type="entry name" value="Clp_protease_ATP-bd_su_ClpX"/>
</dbReference>
<dbReference type="InterPro" id="IPR046425">
    <property type="entry name" value="ClpX_bact"/>
</dbReference>
<dbReference type="InterPro" id="IPR027417">
    <property type="entry name" value="P-loop_NTPase"/>
</dbReference>
<dbReference type="InterPro" id="IPR010603">
    <property type="entry name" value="Znf_CppX_C4"/>
</dbReference>
<dbReference type="InterPro" id="IPR038366">
    <property type="entry name" value="Znf_CppX_C4_sf"/>
</dbReference>
<dbReference type="NCBIfam" id="TIGR00382">
    <property type="entry name" value="clpX"/>
    <property type="match status" value="1"/>
</dbReference>
<dbReference type="NCBIfam" id="NF003745">
    <property type="entry name" value="PRK05342.1"/>
    <property type="match status" value="1"/>
</dbReference>
<dbReference type="PANTHER" id="PTHR48102:SF7">
    <property type="entry name" value="ATP-DEPENDENT CLP PROTEASE ATP-BINDING SUBUNIT CLPX-LIKE, MITOCHONDRIAL"/>
    <property type="match status" value="1"/>
</dbReference>
<dbReference type="PANTHER" id="PTHR48102">
    <property type="entry name" value="ATP-DEPENDENT CLP PROTEASE ATP-BINDING SUBUNIT CLPX-LIKE, MITOCHONDRIAL-RELATED"/>
    <property type="match status" value="1"/>
</dbReference>
<dbReference type="Pfam" id="PF07724">
    <property type="entry name" value="AAA_2"/>
    <property type="match status" value="1"/>
</dbReference>
<dbReference type="Pfam" id="PF10431">
    <property type="entry name" value="ClpB_D2-small"/>
    <property type="match status" value="1"/>
</dbReference>
<dbReference type="Pfam" id="PF06689">
    <property type="entry name" value="zf-C4_ClpX"/>
    <property type="match status" value="1"/>
</dbReference>
<dbReference type="SMART" id="SM00382">
    <property type="entry name" value="AAA"/>
    <property type="match status" value="1"/>
</dbReference>
<dbReference type="SMART" id="SM01086">
    <property type="entry name" value="ClpB_D2-small"/>
    <property type="match status" value="1"/>
</dbReference>
<dbReference type="SMART" id="SM00994">
    <property type="entry name" value="zf-C4_ClpX"/>
    <property type="match status" value="1"/>
</dbReference>
<dbReference type="SUPFAM" id="SSF57716">
    <property type="entry name" value="Glucocorticoid receptor-like (DNA-binding domain)"/>
    <property type="match status" value="1"/>
</dbReference>
<dbReference type="SUPFAM" id="SSF52540">
    <property type="entry name" value="P-loop containing nucleoside triphosphate hydrolases"/>
    <property type="match status" value="1"/>
</dbReference>
<dbReference type="PROSITE" id="PS51902">
    <property type="entry name" value="CLPX_ZB"/>
    <property type="match status" value="1"/>
</dbReference>
<keyword id="KW-0067">ATP-binding</keyword>
<keyword id="KW-0143">Chaperone</keyword>
<keyword id="KW-0479">Metal-binding</keyword>
<keyword id="KW-0547">Nucleotide-binding</keyword>
<keyword id="KW-1185">Reference proteome</keyword>
<keyword id="KW-0862">Zinc</keyword>
<sequence>MAFEKEPHCSFCGKRRSEVDQLVEGCEGYICNDCIEESYVLLNGAEEPLIDDSQNDEKFFENVPTPHQIHAHLDDYVIGQEHAKKVLSVAVYNHYKRLRNALSHHQETNGVELGKSNILLIGPTGSGKTLLAETLARRLNVPFAVADATTLTQAGYVGEDVENVIQKLLMKCNFDAELAERGIIFIDEIDKITRKSESPSITRDVSGEGVQQALLKLIEGTVANINPQGSRKHPKGETIAVDTSKILFICGGAFAGLDKVVEARTHTQSGIGFAAELKKDKDREDLTSLFKQIEPEDLVKFGLIPELIGRLPVITPLQELDEAALIAILTKPKNAIITQYQALFKMEGVELKFTKDALTAIAQKSIVRKTGARGLRSIVENLLLDTMYDLPTLKNSQGITKITVGKGCVQNGDKPKMA</sequence>
<organism>
    <name type="scientific">Haemophilus ducreyi (strain 35000HP / ATCC 700724)</name>
    <dbReference type="NCBI Taxonomy" id="233412"/>
    <lineage>
        <taxon>Bacteria</taxon>
        <taxon>Pseudomonadati</taxon>
        <taxon>Pseudomonadota</taxon>
        <taxon>Gammaproteobacteria</taxon>
        <taxon>Pasteurellales</taxon>
        <taxon>Pasteurellaceae</taxon>
        <taxon>Haemophilus</taxon>
    </lineage>
</organism>
<reference key="1">
    <citation type="submission" date="2003-06" db="EMBL/GenBank/DDBJ databases">
        <title>The complete genome sequence of Haemophilus ducreyi.</title>
        <authorList>
            <person name="Munson R.S. Jr."/>
            <person name="Ray W.C."/>
            <person name="Mahairas G."/>
            <person name="Sabo P."/>
            <person name="Mungur R."/>
            <person name="Johnson L."/>
            <person name="Nguyen D."/>
            <person name="Wang J."/>
            <person name="Forst C."/>
            <person name="Hood L."/>
        </authorList>
    </citation>
    <scope>NUCLEOTIDE SEQUENCE [LARGE SCALE GENOMIC DNA]</scope>
    <source>
        <strain>35000HP / ATCC 700724</strain>
    </source>
</reference>
<accession>Q7VP79</accession>
<evidence type="ECO:0000255" key="1">
    <source>
        <dbReference type="HAMAP-Rule" id="MF_00175"/>
    </source>
</evidence>
<evidence type="ECO:0000255" key="2">
    <source>
        <dbReference type="PROSITE-ProRule" id="PRU01250"/>
    </source>
</evidence>